<comment type="function">
    <text evidence="1">Catalyzes the conversion of dethiobiotin (DTB) to biotin by the insertion of a sulfur atom into dethiobiotin via a radical-based mechanism.</text>
</comment>
<comment type="catalytic activity">
    <reaction evidence="1">
        <text>(4R,5S)-dethiobiotin + (sulfur carrier)-SH + 2 reduced [2Fe-2S]-[ferredoxin] + 2 S-adenosyl-L-methionine = (sulfur carrier)-H + biotin + 2 5'-deoxyadenosine + 2 L-methionine + 2 oxidized [2Fe-2S]-[ferredoxin]</text>
        <dbReference type="Rhea" id="RHEA:22060"/>
        <dbReference type="Rhea" id="RHEA-COMP:10000"/>
        <dbReference type="Rhea" id="RHEA-COMP:10001"/>
        <dbReference type="Rhea" id="RHEA-COMP:14737"/>
        <dbReference type="Rhea" id="RHEA-COMP:14739"/>
        <dbReference type="ChEBI" id="CHEBI:17319"/>
        <dbReference type="ChEBI" id="CHEBI:29917"/>
        <dbReference type="ChEBI" id="CHEBI:33737"/>
        <dbReference type="ChEBI" id="CHEBI:33738"/>
        <dbReference type="ChEBI" id="CHEBI:57586"/>
        <dbReference type="ChEBI" id="CHEBI:57844"/>
        <dbReference type="ChEBI" id="CHEBI:59789"/>
        <dbReference type="ChEBI" id="CHEBI:64428"/>
        <dbReference type="ChEBI" id="CHEBI:149473"/>
        <dbReference type="EC" id="2.8.1.6"/>
    </reaction>
</comment>
<comment type="cofactor">
    <cofactor evidence="1">
        <name>[4Fe-4S] cluster</name>
        <dbReference type="ChEBI" id="CHEBI:49883"/>
    </cofactor>
    <text evidence="1">Binds 1 [4Fe-4S] cluster. The cluster is coordinated with 3 cysteines and an exchangeable S-adenosyl-L-methionine.</text>
</comment>
<comment type="cofactor">
    <cofactor evidence="1">
        <name>[2Fe-2S] cluster</name>
        <dbReference type="ChEBI" id="CHEBI:190135"/>
    </cofactor>
    <text evidence="1">Binds 1 [2Fe-2S] cluster. The cluster is coordinated with 3 cysteines and 1 arginine.</text>
</comment>
<comment type="pathway">
    <text evidence="1">Cofactor biosynthesis; biotin biosynthesis; biotin from 7,8-diaminononanoate: step 2/2.</text>
</comment>
<comment type="subunit">
    <text evidence="1">Homodimer.</text>
</comment>
<comment type="similarity">
    <text evidence="1">Belongs to the radical SAM superfamily. Biotin synthase family.</text>
</comment>
<gene>
    <name evidence="1" type="primary">bioB</name>
    <name type="ordered locus">BDI_1913</name>
</gene>
<keyword id="KW-0001">2Fe-2S</keyword>
<keyword id="KW-0004">4Fe-4S</keyword>
<keyword id="KW-0093">Biotin biosynthesis</keyword>
<keyword id="KW-0408">Iron</keyword>
<keyword id="KW-0411">Iron-sulfur</keyword>
<keyword id="KW-0479">Metal-binding</keyword>
<keyword id="KW-1185">Reference proteome</keyword>
<keyword id="KW-0949">S-adenosyl-L-methionine</keyword>
<keyword id="KW-0808">Transferase</keyword>
<dbReference type="EC" id="2.8.1.6" evidence="1"/>
<dbReference type="EMBL" id="CP000140">
    <property type="protein sequence ID" value="ABR43648.1"/>
    <property type="molecule type" value="Genomic_DNA"/>
</dbReference>
<dbReference type="RefSeq" id="WP_011966629.1">
    <property type="nucleotide sequence ID" value="NC_009615.1"/>
</dbReference>
<dbReference type="SMR" id="A6LD84"/>
<dbReference type="STRING" id="435591.BDI_1913"/>
<dbReference type="PaxDb" id="435591-BDI_1913"/>
<dbReference type="KEGG" id="pdi:BDI_1913"/>
<dbReference type="PATRIC" id="fig|435591.13.peg.1897"/>
<dbReference type="eggNOG" id="COG0502">
    <property type="taxonomic scope" value="Bacteria"/>
</dbReference>
<dbReference type="HOGENOM" id="CLU_033172_2_1_10"/>
<dbReference type="BioCyc" id="PDIS435591:G1G5A-1967-MONOMER"/>
<dbReference type="UniPathway" id="UPA00078">
    <property type="reaction ID" value="UER00162"/>
</dbReference>
<dbReference type="Proteomes" id="UP000000566">
    <property type="component" value="Chromosome"/>
</dbReference>
<dbReference type="GO" id="GO:0051537">
    <property type="term" value="F:2 iron, 2 sulfur cluster binding"/>
    <property type="evidence" value="ECO:0007669"/>
    <property type="project" value="UniProtKB-KW"/>
</dbReference>
<dbReference type="GO" id="GO:0051539">
    <property type="term" value="F:4 iron, 4 sulfur cluster binding"/>
    <property type="evidence" value="ECO:0007669"/>
    <property type="project" value="UniProtKB-KW"/>
</dbReference>
<dbReference type="GO" id="GO:0004076">
    <property type="term" value="F:biotin synthase activity"/>
    <property type="evidence" value="ECO:0007669"/>
    <property type="project" value="UniProtKB-UniRule"/>
</dbReference>
<dbReference type="GO" id="GO:0005506">
    <property type="term" value="F:iron ion binding"/>
    <property type="evidence" value="ECO:0007669"/>
    <property type="project" value="UniProtKB-UniRule"/>
</dbReference>
<dbReference type="GO" id="GO:0009102">
    <property type="term" value="P:biotin biosynthetic process"/>
    <property type="evidence" value="ECO:0007669"/>
    <property type="project" value="UniProtKB-UniRule"/>
</dbReference>
<dbReference type="CDD" id="cd01335">
    <property type="entry name" value="Radical_SAM"/>
    <property type="match status" value="1"/>
</dbReference>
<dbReference type="Gene3D" id="3.20.20.70">
    <property type="entry name" value="Aldolase class I"/>
    <property type="match status" value="1"/>
</dbReference>
<dbReference type="HAMAP" id="MF_01694">
    <property type="entry name" value="BioB"/>
    <property type="match status" value="1"/>
</dbReference>
<dbReference type="InterPro" id="IPR013785">
    <property type="entry name" value="Aldolase_TIM"/>
</dbReference>
<dbReference type="InterPro" id="IPR010722">
    <property type="entry name" value="BATS_dom"/>
</dbReference>
<dbReference type="InterPro" id="IPR002684">
    <property type="entry name" value="Biotin_synth/BioAB"/>
</dbReference>
<dbReference type="InterPro" id="IPR024177">
    <property type="entry name" value="Biotin_synthase"/>
</dbReference>
<dbReference type="InterPro" id="IPR006638">
    <property type="entry name" value="Elp3/MiaA/NifB-like_rSAM"/>
</dbReference>
<dbReference type="InterPro" id="IPR007197">
    <property type="entry name" value="rSAM"/>
</dbReference>
<dbReference type="NCBIfam" id="TIGR00433">
    <property type="entry name" value="bioB"/>
    <property type="match status" value="1"/>
</dbReference>
<dbReference type="PANTHER" id="PTHR22976">
    <property type="entry name" value="BIOTIN SYNTHASE"/>
    <property type="match status" value="1"/>
</dbReference>
<dbReference type="PANTHER" id="PTHR22976:SF2">
    <property type="entry name" value="BIOTIN SYNTHASE, MITOCHONDRIAL"/>
    <property type="match status" value="1"/>
</dbReference>
<dbReference type="Pfam" id="PF06968">
    <property type="entry name" value="BATS"/>
    <property type="match status" value="1"/>
</dbReference>
<dbReference type="Pfam" id="PF04055">
    <property type="entry name" value="Radical_SAM"/>
    <property type="match status" value="1"/>
</dbReference>
<dbReference type="PIRSF" id="PIRSF001619">
    <property type="entry name" value="Biotin_synth"/>
    <property type="match status" value="1"/>
</dbReference>
<dbReference type="SFLD" id="SFLDG01060">
    <property type="entry name" value="BATS_domain_containing"/>
    <property type="match status" value="1"/>
</dbReference>
<dbReference type="SFLD" id="SFLDG01278">
    <property type="entry name" value="biotin_synthase_like"/>
    <property type="match status" value="1"/>
</dbReference>
<dbReference type="SMART" id="SM00876">
    <property type="entry name" value="BATS"/>
    <property type="match status" value="1"/>
</dbReference>
<dbReference type="SMART" id="SM00729">
    <property type="entry name" value="Elp3"/>
    <property type="match status" value="1"/>
</dbReference>
<dbReference type="SUPFAM" id="SSF102114">
    <property type="entry name" value="Radical SAM enzymes"/>
    <property type="match status" value="1"/>
</dbReference>
<dbReference type="PROSITE" id="PS51918">
    <property type="entry name" value="RADICAL_SAM"/>
    <property type="match status" value="1"/>
</dbReference>
<protein>
    <recommendedName>
        <fullName evidence="1">Biotin synthase</fullName>
        <ecNumber evidence="1">2.8.1.6</ecNumber>
    </recommendedName>
</protein>
<reference key="1">
    <citation type="journal article" date="2007" name="PLoS Biol.">
        <title>Evolution of symbiotic bacteria in the distal human intestine.</title>
        <authorList>
            <person name="Xu J."/>
            <person name="Mahowald M.A."/>
            <person name="Ley R.E."/>
            <person name="Lozupone C.A."/>
            <person name="Hamady M."/>
            <person name="Martens E.C."/>
            <person name="Henrissat B."/>
            <person name="Coutinho P.M."/>
            <person name="Minx P."/>
            <person name="Latreille P."/>
            <person name="Cordum H."/>
            <person name="Van Brunt A."/>
            <person name="Kim K."/>
            <person name="Fulton R.S."/>
            <person name="Fulton L.A."/>
            <person name="Clifton S.W."/>
            <person name="Wilson R.K."/>
            <person name="Knight R.D."/>
            <person name="Gordon J.I."/>
        </authorList>
    </citation>
    <scope>NUCLEOTIDE SEQUENCE [LARGE SCALE GENOMIC DNA]</scope>
    <source>
        <strain>ATCC 8503 / DSM 20701 / CIP 104284 / JCM 5825 / NCTC 11152</strain>
    </source>
</reference>
<evidence type="ECO:0000255" key="1">
    <source>
        <dbReference type="HAMAP-Rule" id="MF_01694"/>
    </source>
</evidence>
<evidence type="ECO:0000255" key="2">
    <source>
        <dbReference type="PROSITE-ProRule" id="PRU01266"/>
    </source>
</evidence>
<feature type="chain" id="PRO_0000381514" description="Biotin synthase">
    <location>
        <begin position="1"/>
        <end position="327"/>
    </location>
</feature>
<feature type="domain" description="Radical SAM core" evidence="2">
    <location>
        <begin position="44"/>
        <end position="273"/>
    </location>
</feature>
<feature type="binding site" evidence="1">
    <location>
        <position position="62"/>
    </location>
    <ligand>
        <name>[4Fe-4S] cluster</name>
        <dbReference type="ChEBI" id="CHEBI:49883"/>
        <note>4Fe-4S-S-AdoMet</note>
    </ligand>
</feature>
<feature type="binding site" evidence="1">
    <location>
        <position position="66"/>
    </location>
    <ligand>
        <name>[4Fe-4S] cluster</name>
        <dbReference type="ChEBI" id="CHEBI:49883"/>
        <note>4Fe-4S-S-AdoMet</note>
    </ligand>
</feature>
<feature type="binding site" evidence="1">
    <location>
        <position position="69"/>
    </location>
    <ligand>
        <name>[4Fe-4S] cluster</name>
        <dbReference type="ChEBI" id="CHEBI:49883"/>
        <note>4Fe-4S-S-AdoMet</note>
    </ligand>
</feature>
<feature type="binding site" evidence="1">
    <location>
        <position position="138"/>
    </location>
    <ligand>
        <name>[2Fe-2S] cluster</name>
        <dbReference type="ChEBI" id="CHEBI:190135"/>
    </ligand>
</feature>
<feature type="binding site" evidence="1">
    <location>
        <position position="198"/>
    </location>
    <ligand>
        <name>[2Fe-2S] cluster</name>
        <dbReference type="ChEBI" id="CHEBI:190135"/>
    </ligand>
</feature>
<feature type="binding site" evidence="1">
    <location>
        <position position="268"/>
    </location>
    <ligand>
        <name>[2Fe-2S] cluster</name>
        <dbReference type="ChEBI" id="CHEBI:190135"/>
    </ligand>
</feature>
<name>BIOB_PARD8</name>
<accession>A6LD84</accession>
<organism>
    <name type="scientific">Parabacteroides distasonis (strain ATCC 8503 / DSM 20701 / CIP 104284 / JCM 5825 / NCTC 11152)</name>
    <dbReference type="NCBI Taxonomy" id="435591"/>
    <lineage>
        <taxon>Bacteria</taxon>
        <taxon>Pseudomonadati</taxon>
        <taxon>Bacteroidota</taxon>
        <taxon>Bacteroidia</taxon>
        <taxon>Bacteroidales</taxon>
        <taxon>Tannerellaceae</taxon>
        <taxon>Parabacteroides</taxon>
    </lineage>
</organism>
<proteinExistence type="inferred from homology"/>
<sequence length="327" mass="36871">MTIEEAKQHILEGGKITEEQALSLANHPDKEALYEAAHQITRHFMGNKFDTCSIINAKSGNCSEDCKWCAQSGHYKTLVNLYPLLPAKECVYHAVYNRKQGIRRFALVTSGKRVSDKELEQITDTIRQIKRQSDIKCCASMGLLTRSQLQSLYDSGVENYHCNIETAPSYFRQLCSTHTIEQKMETIHTAREIGFRICCGGIIGMGETMKERIEMACFLQKEGVLSIPLNLLQPIPGTPMENTQILEEEEWLTTIALFRLINPNAFLRFSGGRAQLSEVTQRKSLHIGINSAIIGDLLTTIGSKVEEDKVLFTSEGYSLTENTDWEK</sequence>